<accession>B0K241</accession>
<dbReference type="EMBL" id="CP000923">
    <property type="protein sequence ID" value="ABY91549.1"/>
    <property type="molecule type" value="Genomic_DNA"/>
</dbReference>
<dbReference type="RefSeq" id="WP_003870812.1">
    <property type="nucleotide sequence ID" value="NC_010320.1"/>
</dbReference>
<dbReference type="SMR" id="B0K241"/>
<dbReference type="KEGG" id="tex:Teth514_0231"/>
<dbReference type="HOGENOM" id="CLU_097408_2_2_9"/>
<dbReference type="Proteomes" id="UP000002155">
    <property type="component" value="Chromosome"/>
</dbReference>
<dbReference type="GO" id="GO:0005829">
    <property type="term" value="C:cytosol"/>
    <property type="evidence" value="ECO:0007669"/>
    <property type="project" value="TreeGrafter"/>
</dbReference>
<dbReference type="GO" id="GO:0005960">
    <property type="term" value="C:glycine cleavage complex"/>
    <property type="evidence" value="ECO:0007669"/>
    <property type="project" value="InterPro"/>
</dbReference>
<dbReference type="GO" id="GO:0019464">
    <property type="term" value="P:glycine decarboxylation via glycine cleavage system"/>
    <property type="evidence" value="ECO:0007669"/>
    <property type="project" value="UniProtKB-UniRule"/>
</dbReference>
<dbReference type="CDD" id="cd06848">
    <property type="entry name" value="GCS_H"/>
    <property type="match status" value="1"/>
</dbReference>
<dbReference type="Gene3D" id="2.40.50.100">
    <property type="match status" value="1"/>
</dbReference>
<dbReference type="HAMAP" id="MF_00272">
    <property type="entry name" value="GcvH"/>
    <property type="match status" value="1"/>
</dbReference>
<dbReference type="InterPro" id="IPR003016">
    <property type="entry name" value="2-oxoA_DH_lipoyl-BS"/>
</dbReference>
<dbReference type="InterPro" id="IPR000089">
    <property type="entry name" value="Biotin_lipoyl"/>
</dbReference>
<dbReference type="InterPro" id="IPR002930">
    <property type="entry name" value="GCV_H"/>
</dbReference>
<dbReference type="InterPro" id="IPR033753">
    <property type="entry name" value="GCV_H/Fam206"/>
</dbReference>
<dbReference type="InterPro" id="IPR017453">
    <property type="entry name" value="GCV_H_sub"/>
</dbReference>
<dbReference type="InterPro" id="IPR011053">
    <property type="entry name" value="Single_hybrid_motif"/>
</dbReference>
<dbReference type="NCBIfam" id="TIGR00527">
    <property type="entry name" value="gcvH"/>
    <property type="match status" value="1"/>
</dbReference>
<dbReference type="NCBIfam" id="NF002270">
    <property type="entry name" value="PRK01202.1"/>
    <property type="match status" value="1"/>
</dbReference>
<dbReference type="PANTHER" id="PTHR11715">
    <property type="entry name" value="GLYCINE CLEAVAGE SYSTEM H PROTEIN"/>
    <property type="match status" value="1"/>
</dbReference>
<dbReference type="PANTHER" id="PTHR11715:SF3">
    <property type="entry name" value="GLYCINE CLEAVAGE SYSTEM H PROTEIN-RELATED"/>
    <property type="match status" value="1"/>
</dbReference>
<dbReference type="Pfam" id="PF01597">
    <property type="entry name" value="GCV_H"/>
    <property type="match status" value="1"/>
</dbReference>
<dbReference type="SUPFAM" id="SSF51230">
    <property type="entry name" value="Single hybrid motif"/>
    <property type="match status" value="1"/>
</dbReference>
<dbReference type="PROSITE" id="PS50968">
    <property type="entry name" value="BIOTINYL_LIPOYL"/>
    <property type="match status" value="1"/>
</dbReference>
<dbReference type="PROSITE" id="PS00189">
    <property type="entry name" value="LIPOYL"/>
    <property type="match status" value="1"/>
</dbReference>
<proteinExistence type="inferred from homology"/>
<feature type="chain" id="PRO_1000114558" description="Glycine cleavage system H protein">
    <location>
        <begin position="1"/>
        <end position="126"/>
    </location>
</feature>
<feature type="domain" description="Lipoyl-binding" evidence="2">
    <location>
        <begin position="22"/>
        <end position="103"/>
    </location>
</feature>
<feature type="modified residue" description="N6-lipoyllysine" evidence="1">
    <location>
        <position position="63"/>
    </location>
</feature>
<protein>
    <recommendedName>
        <fullName evidence="1">Glycine cleavage system H protein</fullName>
    </recommendedName>
</protein>
<name>GCSH_THEPX</name>
<evidence type="ECO:0000255" key="1">
    <source>
        <dbReference type="HAMAP-Rule" id="MF_00272"/>
    </source>
</evidence>
<evidence type="ECO:0000255" key="2">
    <source>
        <dbReference type="PROSITE-ProRule" id="PRU01066"/>
    </source>
</evidence>
<organism>
    <name type="scientific">Thermoanaerobacter sp. (strain X514)</name>
    <dbReference type="NCBI Taxonomy" id="399726"/>
    <lineage>
        <taxon>Bacteria</taxon>
        <taxon>Bacillati</taxon>
        <taxon>Bacillota</taxon>
        <taxon>Clostridia</taxon>
        <taxon>Thermoanaerobacterales</taxon>
        <taxon>Thermoanaerobacteraceae</taxon>
        <taxon>Thermoanaerobacter</taxon>
    </lineage>
</organism>
<reference key="1">
    <citation type="submission" date="2008-01" db="EMBL/GenBank/DDBJ databases">
        <title>Complete sequence of Thermoanaerobacter sp. X514.</title>
        <authorList>
            <consortium name="US DOE Joint Genome Institute"/>
            <person name="Copeland A."/>
            <person name="Lucas S."/>
            <person name="Lapidus A."/>
            <person name="Barry K."/>
            <person name="Glavina del Rio T."/>
            <person name="Dalin E."/>
            <person name="Tice H."/>
            <person name="Pitluck S."/>
            <person name="Bruce D."/>
            <person name="Goodwin L."/>
            <person name="Saunders E."/>
            <person name="Brettin T."/>
            <person name="Detter J.C."/>
            <person name="Han C."/>
            <person name="Schmutz J."/>
            <person name="Larimer F."/>
            <person name="Land M."/>
            <person name="Hauser L."/>
            <person name="Kyrpides N."/>
            <person name="Kim E."/>
            <person name="Hemme C."/>
            <person name="Fields M.W."/>
            <person name="He Z."/>
            <person name="Zhou J."/>
            <person name="Richardson P."/>
        </authorList>
    </citation>
    <scope>NUCLEOTIDE SEQUENCE [LARGE SCALE GENOMIC DNA]</scope>
    <source>
        <strain>X514</strain>
    </source>
</reference>
<keyword id="KW-0450">Lipoyl</keyword>
<comment type="function">
    <text evidence="1">The glycine cleavage system catalyzes the degradation of glycine. The H protein shuttles the methylamine group of glycine from the P protein to the T protein.</text>
</comment>
<comment type="cofactor">
    <cofactor evidence="1">
        <name>(R)-lipoate</name>
        <dbReference type="ChEBI" id="CHEBI:83088"/>
    </cofactor>
    <text evidence="1">Binds 1 lipoyl cofactor covalently.</text>
</comment>
<comment type="subunit">
    <text evidence="1">The glycine cleavage system is composed of four proteins: P, T, L and H.</text>
</comment>
<comment type="similarity">
    <text evidence="1">Belongs to the GcvH family.</text>
</comment>
<gene>
    <name evidence="1" type="primary">gcvH</name>
    <name type="ordered locus">Teth514_0231</name>
</gene>
<sequence length="126" mass="13959">MEVLEGLYYSKDHEWVKVEGDKAYIGITDYAQHSLGNIVYIELPEVGAELSAGDVLGVVESVKAASDVYTPVDGKVLEVNNAIVDDPSLVNNDPYGSWMALVELKDKSQLDNLMTAEEYKKFLDEE</sequence>